<evidence type="ECO:0000250" key="1"/>
<evidence type="ECO:0000255" key="2">
    <source>
        <dbReference type="PROSITE-ProRule" id="PRU00381"/>
    </source>
</evidence>
<dbReference type="EMBL" id="DQ067525">
    <property type="protein sequence ID" value="AAZ39860.1"/>
    <property type="molecule type" value="Genomic_DNA"/>
</dbReference>
<dbReference type="EMBL" id="DQ067523">
    <property type="protein sequence ID" value="AAZ39860.1"/>
    <property type="status" value="JOINED"/>
    <property type="molecule type" value="Genomic_DNA"/>
</dbReference>
<dbReference type="EMBL" id="DQ067524">
    <property type="protein sequence ID" value="AAZ39860.1"/>
    <property type="status" value="JOINED"/>
    <property type="molecule type" value="Genomic_DNA"/>
</dbReference>
<dbReference type="SMR" id="Q2VL56"/>
<dbReference type="GO" id="GO:0005634">
    <property type="term" value="C:nucleus"/>
    <property type="evidence" value="ECO:0007669"/>
    <property type="project" value="UniProtKB-SubCell"/>
</dbReference>
<dbReference type="GO" id="GO:0000981">
    <property type="term" value="F:DNA-binding transcription factor activity, RNA polymerase II-specific"/>
    <property type="evidence" value="ECO:0007669"/>
    <property type="project" value="TreeGrafter"/>
</dbReference>
<dbReference type="GO" id="GO:0000978">
    <property type="term" value="F:RNA polymerase II cis-regulatory region sequence-specific DNA binding"/>
    <property type="evidence" value="ECO:0007669"/>
    <property type="project" value="TreeGrafter"/>
</dbReference>
<dbReference type="CDD" id="cd00131">
    <property type="entry name" value="PAX"/>
    <property type="match status" value="1"/>
</dbReference>
<dbReference type="FunFam" id="1.10.10.10:FF:000003">
    <property type="entry name" value="Paired box protein Pax-6"/>
    <property type="match status" value="1"/>
</dbReference>
<dbReference type="FunFam" id="1.10.10.10:FF:000084">
    <property type="entry name" value="paired box protein Pax-9"/>
    <property type="match status" value="1"/>
</dbReference>
<dbReference type="Gene3D" id="1.10.10.10">
    <property type="entry name" value="Winged helix-like DNA-binding domain superfamily/Winged helix DNA-binding domain"/>
    <property type="match status" value="2"/>
</dbReference>
<dbReference type="InterPro" id="IPR009057">
    <property type="entry name" value="Homeodomain-like_sf"/>
</dbReference>
<dbReference type="InterPro" id="IPR043182">
    <property type="entry name" value="PAIRED_DNA-bd_dom"/>
</dbReference>
<dbReference type="InterPro" id="IPR001523">
    <property type="entry name" value="Paired_dom"/>
</dbReference>
<dbReference type="InterPro" id="IPR043565">
    <property type="entry name" value="PAX_fam"/>
</dbReference>
<dbReference type="InterPro" id="IPR036388">
    <property type="entry name" value="WH-like_DNA-bd_sf"/>
</dbReference>
<dbReference type="PANTHER" id="PTHR45636">
    <property type="entry name" value="PAIRED BOX PROTEIN PAX-6-RELATED-RELATED"/>
    <property type="match status" value="1"/>
</dbReference>
<dbReference type="PANTHER" id="PTHR45636:SF13">
    <property type="entry name" value="PAIRED BOX PROTEIN PAX-9"/>
    <property type="match status" value="1"/>
</dbReference>
<dbReference type="Pfam" id="PF00292">
    <property type="entry name" value="PAX"/>
    <property type="match status" value="1"/>
</dbReference>
<dbReference type="PRINTS" id="PR00027">
    <property type="entry name" value="PAIREDBOX"/>
</dbReference>
<dbReference type="SMART" id="SM00351">
    <property type="entry name" value="PAX"/>
    <property type="match status" value="1"/>
</dbReference>
<dbReference type="SUPFAM" id="SSF46689">
    <property type="entry name" value="Homeodomain-like"/>
    <property type="match status" value="1"/>
</dbReference>
<dbReference type="PROSITE" id="PS00034">
    <property type="entry name" value="PAIRED_1"/>
    <property type="match status" value="1"/>
</dbReference>
<dbReference type="PROSITE" id="PS51057">
    <property type="entry name" value="PAIRED_2"/>
    <property type="match status" value="1"/>
</dbReference>
<proteinExistence type="inferred from homology"/>
<comment type="function">
    <text evidence="1">Transcription factor required for normal development of thymus, parathyroid glands, ultimobranchial bodies, teeth, skeletal elements of skull and larynx as well as distal limbs.</text>
</comment>
<comment type="subunit">
    <text evidence="1">Interacts with KDM5B.</text>
</comment>
<comment type="subcellular location">
    <subcellularLocation>
        <location>Nucleus</location>
    </subcellularLocation>
</comment>
<feature type="chain" id="PRO_0000050212" description="Paired box protein Pax-9">
    <location>
        <begin position="1"/>
        <end position="341"/>
    </location>
</feature>
<feature type="DNA-binding region" description="Paired" evidence="2">
    <location>
        <begin position="4"/>
        <end position="130"/>
    </location>
</feature>
<feature type="region of interest" description="PAI subdomain" evidence="2">
    <location>
        <begin position="7"/>
        <end position="63"/>
    </location>
</feature>
<feature type="region of interest" description="RED subdomain" evidence="2">
    <location>
        <begin position="82"/>
        <end position="130"/>
    </location>
</feature>
<feature type="region of interest" description="Interaction with KDM5B" evidence="1">
    <location>
        <begin position="168"/>
        <end position="189"/>
    </location>
</feature>
<name>PAX9_SAGOE</name>
<reference key="1">
    <citation type="journal article" date="2006" name="Mol. Biol. Evol.">
        <title>Molecular evolution of the primate developmental genes MSX1 and PAX9.</title>
        <authorList>
            <person name="Perry G.H."/>
            <person name="Verrelli B.C."/>
            <person name="Stone A.C."/>
        </authorList>
    </citation>
    <scope>NUCLEOTIDE SEQUENCE [GENOMIC DNA]</scope>
    <source>
        <strain>Isolate A96-51 Sqr53-96</strain>
    </source>
</reference>
<protein>
    <recommendedName>
        <fullName>Paired box protein Pax-9</fullName>
    </recommendedName>
</protein>
<gene>
    <name type="primary">PAX9</name>
</gene>
<accession>Q2VL56</accession>
<sequence length="341" mass="36394">MEPAFGEVNQLGGVFVNGRPLPNAIRLRIVELAQLGIRPCDISRQLRVSHGCVSKILARYNETGSILPGAIGGSKPRVTTPTVVKHIRTYKQRDPGIFAWEIRDRLLADGVCDKYNVPSVSSISRILRNKIGNLAQQAHYDSYKQHQPAPQPALPYNHIYSYPSPITAAAAKVPTPPGVPAIPGSVAMPRTWPSSHSVTDILGIRSITDQVSDSSPYHSPKVEEWSSLGRNNFPAAAPHAVNGLEKGALEQETKYSQAPNGLPAVGSFVSASSMAPYPTPAQVSPYMTYSAAPSGYVAGHGWQHAGSTPLSPHNCDIPASLAFKGMQAAREGSHSVTASAL</sequence>
<organism>
    <name type="scientific">Saguinus oedipus</name>
    <name type="common">Cotton-top tamarin</name>
    <dbReference type="NCBI Taxonomy" id="9490"/>
    <lineage>
        <taxon>Eukaryota</taxon>
        <taxon>Metazoa</taxon>
        <taxon>Chordata</taxon>
        <taxon>Craniata</taxon>
        <taxon>Vertebrata</taxon>
        <taxon>Euteleostomi</taxon>
        <taxon>Mammalia</taxon>
        <taxon>Eutheria</taxon>
        <taxon>Euarchontoglires</taxon>
        <taxon>Primates</taxon>
        <taxon>Haplorrhini</taxon>
        <taxon>Platyrrhini</taxon>
        <taxon>Cebidae</taxon>
        <taxon>Callitrichinae</taxon>
        <taxon>Saguinus</taxon>
    </lineage>
</organism>
<keyword id="KW-0217">Developmental protein</keyword>
<keyword id="KW-0238">DNA-binding</keyword>
<keyword id="KW-0539">Nucleus</keyword>
<keyword id="KW-0563">Paired box</keyword>
<keyword id="KW-0804">Transcription</keyword>
<keyword id="KW-0805">Transcription regulation</keyword>